<protein>
    <recommendedName>
        <fullName>Protein RegB</fullName>
    </recommendedName>
</protein>
<evidence type="ECO:0000305" key="1"/>
<keyword id="KW-1185">Reference proteome</keyword>
<name>REGB_PSEAE</name>
<proteinExistence type="predicted"/>
<comment type="function">
    <text>Required for optimal exotoxin A production.</text>
</comment>
<accession>Q03381</accession>
<sequence length="75" mass="7571">MRLPAVTPGWPAIPPGATLGGFDGQGRRSWATISRAPSGASCSRNRSATRTYGWGATATTPATITGIPSTTAPAT</sequence>
<reference key="1">
    <citation type="journal article" date="1990" name="Mol. Microbiol.">
        <title>Identification of regB, a gene required for optimal exotoxin A yields in Pseudomonas aeruginosa.</title>
        <authorList>
            <person name="Wick M.J."/>
            <person name="Frank D.W."/>
            <person name="Storey D.G."/>
            <person name="Iglewski B.H."/>
        </authorList>
    </citation>
    <scope>NUCLEOTIDE SEQUENCE [GENOMIC DNA]</scope>
    <source>
        <strain>ATCC 15692 / DSM 22644 / CIP 104116 / JCM 14847 / LMG 12228 / 1C / PRS 101 / PAO1</strain>
    </source>
</reference>
<reference key="2">
    <citation type="journal article" date="2000" name="Nature">
        <title>Complete genome sequence of Pseudomonas aeruginosa PAO1, an opportunistic pathogen.</title>
        <authorList>
            <person name="Stover C.K."/>
            <person name="Pham X.-Q.T."/>
            <person name="Erwin A.L."/>
            <person name="Mizoguchi S.D."/>
            <person name="Warrener P."/>
            <person name="Hickey M.J."/>
            <person name="Brinkman F.S.L."/>
            <person name="Hufnagle W.O."/>
            <person name="Kowalik D.J."/>
            <person name="Lagrou M."/>
            <person name="Garber R.L."/>
            <person name="Goltry L."/>
            <person name="Tolentino E."/>
            <person name="Westbrock-Wadman S."/>
            <person name="Yuan Y."/>
            <person name="Brody L.L."/>
            <person name="Coulter S.N."/>
            <person name="Folger K.R."/>
            <person name="Kas A."/>
            <person name="Larbig K."/>
            <person name="Lim R.M."/>
            <person name="Smith K.A."/>
            <person name="Spencer D.H."/>
            <person name="Wong G.K.-S."/>
            <person name="Wu Z."/>
            <person name="Paulsen I.T."/>
            <person name="Reizer J."/>
            <person name="Saier M.H. Jr."/>
            <person name="Hancock R.E.W."/>
            <person name="Lory S."/>
            <person name="Olson M.V."/>
        </authorList>
    </citation>
    <scope>NUCLEOTIDE SEQUENCE [LARGE SCALE GENOMIC DNA]</scope>
    <source>
        <strain>ATCC 15692 / DSM 22644 / CIP 104116 / JCM 14847 / LMG 12228 / 1C / PRS 101 / PAO1</strain>
    </source>
</reference>
<feature type="chain" id="PRO_0000097242" description="Protein RegB">
    <location>
        <begin position="1"/>
        <end position="75"/>
    </location>
</feature>
<feature type="sequence conflict" description="In Ref. 2." evidence="1" ref="2">
    <original>M</original>
    <variation>T</variation>
    <location>
        <position position="1"/>
    </location>
</feature>
<feature type="sequence conflict" description="In Ref. 1; CAA36701." evidence="1" ref="1">
    <original>RTY</original>
    <variation>QTF</variation>
    <location>
        <begin position="50"/>
        <end position="52"/>
    </location>
</feature>
<organism>
    <name type="scientific">Pseudomonas aeruginosa (strain ATCC 15692 / DSM 22644 / CIP 104116 / JCM 14847 / LMG 12228 / 1C / PRS 101 / PAO1)</name>
    <dbReference type="NCBI Taxonomy" id="208964"/>
    <lineage>
        <taxon>Bacteria</taxon>
        <taxon>Pseudomonadati</taxon>
        <taxon>Pseudomonadota</taxon>
        <taxon>Gammaproteobacteria</taxon>
        <taxon>Pseudomonadales</taxon>
        <taxon>Pseudomonadaceae</taxon>
        <taxon>Pseudomonas</taxon>
    </lineage>
</organism>
<gene>
    <name type="primary">regB</name>
    <name type="ordered locus">PA0706.1</name>
</gene>
<dbReference type="EMBL" id="X52463">
    <property type="protein sequence ID" value="CAA36701.1"/>
    <property type="molecule type" value="Genomic_DNA"/>
</dbReference>
<dbReference type="EMBL" id="AE004091">
    <property type="status" value="NOT_ANNOTATED_CDS"/>
    <property type="molecule type" value="Genomic_DNA"/>
</dbReference>
<dbReference type="PIR" id="S11797">
    <property type="entry name" value="S11797"/>
</dbReference>
<dbReference type="InParanoid" id="Q03381"/>
<dbReference type="Proteomes" id="UP000002438">
    <property type="component" value="Chromosome"/>
</dbReference>